<feature type="signal peptide" evidence="15 19 20">
    <location>
        <begin position="1"/>
        <end position="23"/>
    </location>
</feature>
<feature type="chain" id="PRO_0000016258" description="Integrin alpha-6">
    <location>
        <begin position="24"/>
        <end position="1130"/>
    </location>
</feature>
<feature type="chain" id="PRO_0000016259" description="Integrin alpha-6 heavy chain" evidence="4">
    <location>
        <begin position="24"/>
        <end position="938"/>
    </location>
</feature>
<feature type="chain" id="PRO_0000425742" description="Processed integrin alpha-6" evidence="13">
    <location>
        <begin position="636"/>
        <end position="1130"/>
    </location>
</feature>
<feature type="chain" id="PRO_0000016260" description="Integrin alpha-6 light chain" evidence="4">
    <location>
        <begin position="942"/>
        <end position="1130"/>
    </location>
</feature>
<feature type="topological domain" description="Extracellular" evidence="4">
    <location>
        <begin position="24"/>
        <end position="1050"/>
    </location>
</feature>
<feature type="transmembrane region" description="Helical" evidence="4">
    <location>
        <begin position="1051"/>
        <end position="1076"/>
    </location>
</feature>
<feature type="topological domain" description="Cytoplasmic" evidence="4">
    <location>
        <begin position="1077"/>
        <end position="1130"/>
    </location>
</feature>
<feature type="repeat" description="FG-GAP 1" evidence="5">
    <location>
        <begin position="30"/>
        <end position="95"/>
    </location>
</feature>
<feature type="repeat" description="FG-GAP 2" evidence="5">
    <location>
        <begin position="101"/>
        <end position="166"/>
    </location>
</feature>
<feature type="repeat" description="FG-GAP 3" evidence="5">
    <location>
        <begin position="176"/>
        <end position="229"/>
    </location>
</feature>
<feature type="repeat" description="FG-GAP 4" evidence="5">
    <location>
        <begin position="283"/>
        <end position="339"/>
    </location>
</feature>
<feature type="repeat" description="FG-GAP 5" evidence="5">
    <location>
        <begin position="340"/>
        <end position="402"/>
    </location>
</feature>
<feature type="repeat" description="FG-GAP 6" evidence="5">
    <location>
        <begin position="403"/>
        <end position="458"/>
    </location>
</feature>
<feature type="repeat" description="FG-GAP 7" evidence="5">
    <location>
        <begin position="459"/>
        <end position="518"/>
    </location>
</feature>
<feature type="region of interest" description="Interaction with HPS5">
    <location>
        <begin position="1077"/>
        <end position="1083"/>
    </location>
</feature>
<feature type="short sequence motif" description="GFFKR motif">
    <location>
        <begin position="1079"/>
        <end position="1083"/>
    </location>
</feature>
<feature type="binding site" evidence="2">
    <location>
        <position position="363"/>
    </location>
    <ligand>
        <name>Ca(2+)</name>
        <dbReference type="ChEBI" id="CHEBI:29108"/>
        <label>1</label>
    </ligand>
</feature>
<feature type="binding site" evidence="2">
    <location>
        <position position="365"/>
    </location>
    <ligand>
        <name>Ca(2+)</name>
        <dbReference type="ChEBI" id="CHEBI:29108"/>
        <label>1</label>
    </ligand>
</feature>
<feature type="binding site" evidence="2">
    <location>
        <position position="367"/>
    </location>
    <ligand>
        <name>Ca(2+)</name>
        <dbReference type="ChEBI" id="CHEBI:29108"/>
        <label>1</label>
    </ligand>
</feature>
<feature type="binding site" evidence="2">
    <location>
        <position position="371"/>
    </location>
    <ligand>
        <name>Ca(2+)</name>
        <dbReference type="ChEBI" id="CHEBI:29108"/>
        <label>1</label>
    </ligand>
</feature>
<feature type="binding site" evidence="2">
    <location>
        <position position="425"/>
    </location>
    <ligand>
        <name>Ca(2+)</name>
        <dbReference type="ChEBI" id="CHEBI:29108"/>
        <label>2</label>
    </ligand>
</feature>
<feature type="binding site" evidence="2">
    <location>
        <position position="427"/>
    </location>
    <ligand>
        <name>Ca(2+)</name>
        <dbReference type="ChEBI" id="CHEBI:29108"/>
        <label>2</label>
    </ligand>
</feature>
<feature type="binding site" evidence="2">
    <location>
        <position position="429"/>
    </location>
    <ligand>
        <name>Ca(2+)</name>
        <dbReference type="ChEBI" id="CHEBI:29108"/>
        <label>2</label>
    </ligand>
</feature>
<feature type="binding site" evidence="2">
    <location>
        <position position="431"/>
    </location>
    <ligand>
        <name>Ca(2+)</name>
        <dbReference type="ChEBI" id="CHEBI:29108"/>
        <label>2</label>
    </ligand>
</feature>
<feature type="binding site" evidence="2">
    <location>
        <position position="433"/>
    </location>
    <ligand>
        <name>Ca(2+)</name>
        <dbReference type="ChEBI" id="CHEBI:29108"/>
        <label>2</label>
    </ligand>
</feature>
<feature type="binding site" evidence="2">
    <location>
        <position position="480"/>
    </location>
    <ligand>
        <name>Ca(2+)</name>
        <dbReference type="ChEBI" id="CHEBI:29108"/>
        <label>3</label>
    </ligand>
</feature>
<feature type="binding site" evidence="2">
    <location>
        <position position="482"/>
    </location>
    <ligand>
        <name>Ca(2+)</name>
        <dbReference type="ChEBI" id="CHEBI:29108"/>
        <label>3</label>
    </ligand>
</feature>
<feature type="binding site" evidence="2">
    <location>
        <position position="484"/>
    </location>
    <ligand>
        <name>Ca(2+)</name>
        <dbReference type="ChEBI" id="CHEBI:29108"/>
        <label>3</label>
    </ligand>
</feature>
<feature type="binding site" evidence="2">
    <location>
        <position position="486"/>
    </location>
    <ligand>
        <name>Ca(2+)</name>
        <dbReference type="ChEBI" id="CHEBI:29108"/>
        <label>3</label>
    </ligand>
</feature>
<feature type="binding site" evidence="2">
    <location>
        <position position="488"/>
    </location>
    <ligand>
        <name>Ca(2+)</name>
        <dbReference type="ChEBI" id="CHEBI:29108"/>
        <label>3</label>
    </ligand>
</feature>
<feature type="site" description="Cleavage; by PLAU in invasive prostate cancer" evidence="13">
    <location>
        <begin position="634"/>
        <end position="635"/>
    </location>
</feature>
<feature type="lipid moiety-binding region" description="S-palmitoyl cysteine; by DHHC3" evidence="10 17">
    <location>
        <position position="1078"/>
    </location>
</feature>
<feature type="glycosylation site" description="N-linked (GlcNAc...) asparagine" evidence="4">
    <location>
        <position position="78"/>
    </location>
</feature>
<feature type="glycosylation site" description="N-linked (GlcNAc...) asparagine" evidence="4">
    <location>
        <position position="223"/>
    </location>
</feature>
<feature type="glycosylation site" description="N-linked (GlcNAc...) asparagine" evidence="11">
    <location>
        <position position="323"/>
    </location>
</feature>
<feature type="glycosylation site" description="N-linked (GlcNAc...) asparagine" evidence="4">
    <location>
        <position position="409"/>
    </location>
</feature>
<feature type="glycosylation site" description="N-linked (GlcNAc...) asparagine" evidence="4">
    <location>
        <position position="770"/>
    </location>
</feature>
<feature type="glycosylation site" description="N-linked (GlcNAc...) asparagine" evidence="4">
    <location>
        <position position="787"/>
    </location>
</feature>
<feature type="glycosylation site" description="N-linked (GlcNAc...) asparagine" evidence="4">
    <location>
        <position position="930"/>
    </location>
</feature>
<feature type="glycosylation site" description="N-linked (GlcNAc...) asparagine" evidence="4">
    <location>
        <position position="966"/>
    </location>
</feature>
<feature type="glycosylation site" description="N-linked (GlcNAc...) asparagine" evidence="14">
    <location>
        <position position="997"/>
    </location>
</feature>
<feature type="disulfide bond" evidence="1">
    <location>
        <begin position="86"/>
        <end position="94"/>
    </location>
</feature>
<feature type="disulfide bond" evidence="1">
    <location>
        <begin position="131"/>
        <end position="154"/>
    </location>
</feature>
<feature type="disulfide bond" evidence="1">
    <location>
        <begin position="175"/>
        <end position="188"/>
    </location>
</feature>
<feature type="disulfide bond" evidence="1">
    <location>
        <begin position="528"/>
        <end position="535"/>
    </location>
</feature>
<feature type="disulfide bond" evidence="1">
    <location>
        <begin position="541"/>
        <end position="601"/>
    </location>
</feature>
<feature type="disulfide bond" evidence="1">
    <location>
        <begin position="665"/>
        <end position="671"/>
    </location>
</feature>
<feature type="disulfide bond" evidence="1">
    <location>
        <begin position="765"/>
        <end position="776"/>
    </location>
</feature>
<feature type="disulfide bond" description="Interchain (between heavy and light chains)" evidence="1">
    <location>
        <begin position="920"/>
        <end position="967"/>
    </location>
</feature>
<feature type="disulfide bond" evidence="1">
    <location>
        <begin position="973"/>
        <end position="978"/>
    </location>
</feature>
<feature type="splice variant" id="VSP_036406" description="In isoform 7." evidence="27">
    <location>
        <begin position="1"/>
        <end position="114"/>
    </location>
</feature>
<feature type="splice variant" id="VSP_002723" description="In isoform Alpha-6X2A, isoform Alpha-6X2B and isoform 7." evidence="27">
    <location>
        <begin position="215"/>
        <end position="258"/>
    </location>
</feature>
<feature type="splice variant" id="VSP_002724" description="In isoform Alpha-6X1A and isoform Alpha-6X1B." evidence="28 29">
    <location>
        <begin position="259"/>
        <end position="297"/>
    </location>
</feature>
<feature type="splice variant" id="VSP_036407" description="In isoform 9." evidence="28">
    <location>
        <begin position="918"/>
        <end position="932"/>
    </location>
</feature>
<feature type="splice variant" id="VSP_002725" description="In isoform Alpha-6X1A, isoform Alpha-6X2A, isoform Alpha-6X1X2A, isoform 7 and isoform 9." evidence="27 28 29">
    <original>SRYDDSVPRYHAVRIRKEEREIKDEKYIDNLEKKQWITKWNENESYS</original>
    <variation>NKKDHYDATYHKAEIHAQPSDKERLTSDA</variation>
    <location>
        <begin position="1084"/>
        <end position="1130"/>
    </location>
</feature>
<feature type="sequence conflict" description="In Ref. 1; CAA37655 and 8; CAA42099." evidence="30" ref="1 8">
    <original>A</original>
    <variation>G</variation>
    <location>
        <position position="69"/>
    </location>
</feature>
<feature type="sequence conflict" description="In Ref. 4; BAG59130 and 7; AAI36456/AAI36457." evidence="30" ref="4 7">
    <original>A</original>
    <variation>T</variation>
    <location>
        <position position="419"/>
    </location>
</feature>
<feature type="sequence conflict" description="In Ref. 8; CAA42099." evidence="30" ref="8">
    <original>F</original>
    <variation>L</variation>
    <location>
        <position position="501"/>
    </location>
</feature>
<feature type="sequence conflict" description="In Ref. 1; CAA37655 and 3; AAD48469." evidence="30" ref="1 3">
    <original>D</original>
    <variation>Y</variation>
    <location>
        <position position="805"/>
    </location>
</feature>
<feature type="sequence conflict" description="In Ref. 1; AAB20355." evidence="30" ref="1">
    <original>E</original>
    <variation>R</variation>
    <location>
        <position position="1125"/>
    </location>
</feature>
<feature type="turn" evidence="31">
    <location>
        <begin position="30"/>
        <end position="32"/>
    </location>
</feature>
<feature type="strand" evidence="31">
    <location>
        <begin position="34"/>
        <end position="37"/>
    </location>
</feature>
<feature type="strand" evidence="31">
    <location>
        <begin position="46"/>
        <end position="53"/>
    </location>
</feature>
<feature type="strand" evidence="31">
    <location>
        <begin position="59"/>
        <end position="66"/>
    </location>
</feature>
<feature type="strand" evidence="31">
    <location>
        <begin position="75"/>
        <end position="79"/>
    </location>
</feature>
<feature type="strand" evidence="31">
    <location>
        <begin position="81"/>
        <end position="87"/>
    </location>
</feature>
<feature type="turn" evidence="31">
    <location>
        <begin position="105"/>
        <end position="107"/>
    </location>
</feature>
<feature type="strand" evidence="31">
    <location>
        <begin position="115"/>
        <end position="121"/>
    </location>
</feature>
<feature type="strand" evidence="31">
    <location>
        <begin position="128"/>
        <end position="132"/>
    </location>
</feature>
<feature type="strand" evidence="31">
    <location>
        <begin position="136"/>
        <end position="140"/>
    </location>
</feature>
<feature type="strand" evidence="31">
    <location>
        <begin position="147"/>
        <end position="149"/>
    </location>
</feature>
<feature type="strand" evidence="31">
    <location>
        <begin position="153"/>
        <end position="157"/>
    </location>
</feature>
<feature type="strand" evidence="31">
    <location>
        <begin position="159"/>
        <end position="162"/>
    </location>
</feature>
<feature type="strand" evidence="31">
    <location>
        <begin position="165"/>
        <end position="170"/>
    </location>
</feature>
<feature type="turn" evidence="31">
    <location>
        <begin position="174"/>
        <end position="177"/>
    </location>
</feature>
<feature type="turn" evidence="31">
    <location>
        <begin position="182"/>
        <end position="187"/>
    </location>
</feature>
<feature type="strand" evidence="31">
    <location>
        <begin position="192"/>
        <end position="196"/>
    </location>
</feature>
<feature type="strand" evidence="31">
    <location>
        <begin position="203"/>
        <end position="207"/>
    </location>
</feature>
<feature type="helix" evidence="31">
    <location>
        <begin position="210"/>
        <end position="213"/>
    </location>
</feature>
<feature type="strand" evidence="31">
    <location>
        <begin position="215"/>
        <end position="220"/>
    </location>
</feature>
<feature type="strand" evidence="31">
    <location>
        <begin position="299"/>
        <end position="319"/>
    </location>
</feature>
<feature type="helix" evidence="31">
    <location>
        <begin position="322"/>
        <end position="324"/>
    </location>
</feature>
<feature type="strand" evidence="31">
    <location>
        <begin position="326"/>
        <end position="333"/>
    </location>
</feature>
<feature type="strand" evidence="31">
    <location>
        <begin position="335"/>
        <end position="347"/>
    </location>
</feature>
<feature type="strand" evidence="31">
    <location>
        <begin position="357"/>
        <end position="362"/>
    </location>
</feature>
<feature type="strand" evidence="31">
    <location>
        <begin position="367"/>
        <end position="369"/>
    </location>
</feature>
<feature type="strand" evidence="31">
    <location>
        <begin position="371"/>
        <end position="376"/>
    </location>
</feature>
<feature type="strand" evidence="31">
    <location>
        <begin position="389"/>
        <end position="393"/>
    </location>
</feature>
<feature type="strand" evidence="31">
    <location>
        <begin position="406"/>
        <end position="409"/>
    </location>
</feature>
<feature type="strand" evidence="31">
    <location>
        <begin position="420"/>
        <end position="424"/>
    </location>
</feature>
<feature type="strand" evidence="31">
    <location>
        <begin position="429"/>
        <end position="431"/>
    </location>
</feature>
<feature type="strand" evidence="31">
    <location>
        <begin position="433"/>
        <end position="438"/>
    </location>
</feature>
<feature type="strand" evidence="31">
    <location>
        <begin position="445"/>
        <end position="452"/>
    </location>
</feature>
<feature type="strand" evidence="31">
    <location>
        <begin position="455"/>
        <end position="465"/>
    </location>
</feature>
<feature type="strand" evidence="31">
    <location>
        <begin position="467"/>
        <end position="479"/>
    </location>
</feature>
<feature type="strand" evidence="31">
    <location>
        <begin position="481"/>
        <end position="486"/>
    </location>
</feature>
<feature type="strand" evidence="31">
    <location>
        <begin position="488"/>
        <end position="501"/>
    </location>
</feature>
<feature type="strand" evidence="31">
    <location>
        <begin position="506"/>
        <end position="517"/>
    </location>
</feature>
<feature type="strand" evidence="31">
    <location>
        <begin position="527"/>
        <end position="529"/>
    </location>
</feature>
<feature type="strand" evidence="31">
    <location>
        <begin position="535"/>
        <end position="550"/>
    </location>
</feature>
<feature type="strand" evidence="31">
    <location>
        <begin position="557"/>
        <end position="563"/>
    </location>
</feature>
<feature type="strand" evidence="31">
    <location>
        <begin position="587"/>
        <end position="590"/>
    </location>
</feature>
<feature type="strand" evidence="31">
    <location>
        <begin position="600"/>
        <end position="607"/>
    </location>
</feature>
<feature type="strand" evidence="31">
    <location>
        <begin position="619"/>
        <end position="624"/>
    </location>
</feature>
<feature type="strand" evidence="31">
    <location>
        <begin position="652"/>
        <end position="660"/>
    </location>
</feature>
<feature type="modified residue" description="Phosphoserine" evidence="24">
    <location sequence="P23229-2">
        <position position="1064"/>
    </location>
</feature>
<feature type="modified residue" description="Phosphoserine" evidence="24">
    <location sequence="P23229-4">
        <position position="1059"/>
    </location>
</feature>
<feature type="modified residue" description="Phosphoserine" evidence="24">
    <location sequence="P23229-6">
        <position position="1103"/>
    </location>
</feature>
<proteinExistence type="evidence at protein level"/>
<name>ITA6_HUMAN</name>
<dbReference type="EMBL" id="X53586">
    <property type="protein sequence ID" value="CAA37655.1"/>
    <property type="molecule type" value="mRNA"/>
</dbReference>
<dbReference type="EMBL" id="AF166343">
    <property type="protein sequence ID" value="AAD48469.1"/>
    <property type="molecule type" value="Genomic_DNA"/>
</dbReference>
<dbReference type="EMBL" id="AF166335">
    <property type="protein sequence ID" value="AAD48469.1"/>
    <property type="status" value="JOINED"/>
    <property type="molecule type" value="Genomic_DNA"/>
</dbReference>
<dbReference type="EMBL" id="AF166336">
    <property type="protein sequence ID" value="AAD48469.1"/>
    <property type="status" value="JOINED"/>
    <property type="molecule type" value="Genomic_DNA"/>
</dbReference>
<dbReference type="EMBL" id="AF166337">
    <property type="protein sequence ID" value="AAD48469.1"/>
    <property type="status" value="JOINED"/>
    <property type="molecule type" value="Genomic_DNA"/>
</dbReference>
<dbReference type="EMBL" id="AF166338">
    <property type="protein sequence ID" value="AAD48469.1"/>
    <property type="status" value="JOINED"/>
    <property type="molecule type" value="Genomic_DNA"/>
</dbReference>
<dbReference type="EMBL" id="AF166339">
    <property type="protein sequence ID" value="AAD48469.1"/>
    <property type="status" value="JOINED"/>
    <property type="molecule type" value="Genomic_DNA"/>
</dbReference>
<dbReference type="EMBL" id="AF166340">
    <property type="protein sequence ID" value="AAD48469.1"/>
    <property type="status" value="JOINED"/>
    <property type="molecule type" value="Genomic_DNA"/>
</dbReference>
<dbReference type="EMBL" id="AF166341">
    <property type="protein sequence ID" value="AAD48469.1"/>
    <property type="status" value="JOINED"/>
    <property type="molecule type" value="Genomic_DNA"/>
</dbReference>
<dbReference type="EMBL" id="AF166342">
    <property type="protein sequence ID" value="AAD48469.1"/>
    <property type="status" value="JOINED"/>
    <property type="molecule type" value="Genomic_DNA"/>
</dbReference>
<dbReference type="EMBL" id="AK294436">
    <property type="protein sequence ID" value="BAG57680.1"/>
    <property type="status" value="ALT_INIT"/>
    <property type="molecule type" value="mRNA"/>
</dbReference>
<dbReference type="EMBL" id="AK296496">
    <property type="protein sequence ID" value="BAG59130.1"/>
    <property type="molecule type" value="mRNA"/>
</dbReference>
<dbReference type="EMBL" id="AC078883">
    <property type="protein sequence ID" value="AAX93133.1"/>
    <property type="molecule type" value="Genomic_DNA"/>
</dbReference>
<dbReference type="EMBL" id="CH471058">
    <property type="protein sequence ID" value="EAX11176.1"/>
    <property type="molecule type" value="Genomic_DNA"/>
</dbReference>
<dbReference type="EMBL" id="CH471058">
    <property type="protein sequence ID" value="EAX11177.1"/>
    <property type="molecule type" value="Genomic_DNA"/>
</dbReference>
<dbReference type="EMBL" id="BC050585">
    <property type="protein sequence ID" value="AAH50585.1"/>
    <property type="molecule type" value="mRNA"/>
</dbReference>
<dbReference type="EMBL" id="BC136455">
    <property type="protein sequence ID" value="AAI36456.1"/>
    <property type="molecule type" value="mRNA"/>
</dbReference>
<dbReference type="EMBL" id="BC136456">
    <property type="protein sequence ID" value="AAI36457.1"/>
    <property type="molecule type" value="mRNA"/>
</dbReference>
<dbReference type="EMBL" id="X59512">
    <property type="protein sequence ID" value="CAA42099.1"/>
    <property type="molecule type" value="mRNA"/>
</dbReference>
<dbReference type="EMBL" id="S66213">
    <property type="protein sequence ID" value="AAB20355.1"/>
    <property type="molecule type" value="mRNA"/>
</dbReference>
<dbReference type="EMBL" id="S66196">
    <property type="protein sequence ID" value="AAB20354.1"/>
    <property type="molecule type" value="mRNA"/>
</dbReference>
<dbReference type="EMBL" id="S52135">
    <property type="protein sequence ID" value="AAB24829.1"/>
    <property type="molecule type" value="Genomic_DNA"/>
</dbReference>
<dbReference type="EMBL" id="L40385">
    <property type="status" value="NOT_ANNOTATED_CDS"/>
    <property type="molecule type" value="Genomic_DNA"/>
</dbReference>
<dbReference type="EMBL" id="AB208842">
    <property type="protein sequence ID" value="BAD92079.1"/>
    <property type="molecule type" value="mRNA"/>
</dbReference>
<dbReference type="EMBL" id="DQ858220">
    <property type="protein sequence ID" value="ABH11650.1"/>
    <property type="molecule type" value="mRNA"/>
</dbReference>
<dbReference type="CCDS" id="CCDS2249.1">
    <molecule id="P23229-2"/>
</dbReference>
<dbReference type="CCDS" id="CCDS46451.1">
    <molecule id="P23229-3"/>
</dbReference>
<dbReference type="CCDS" id="CCDS82534.1">
    <molecule id="P23229-7"/>
</dbReference>
<dbReference type="CCDS" id="CCDS92897.1">
    <molecule id="P23229-1"/>
</dbReference>
<dbReference type="PIR" id="A41543">
    <property type="entry name" value="A41543"/>
</dbReference>
<dbReference type="PIR" id="B36429">
    <property type="entry name" value="B36429"/>
</dbReference>
<dbReference type="RefSeq" id="NP_000201.2">
    <molecule id="P23229-2"/>
    <property type="nucleotide sequence ID" value="NM_000210.4"/>
</dbReference>
<dbReference type="RefSeq" id="NP_001073286.1">
    <molecule id="P23229-3"/>
    <property type="nucleotide sequence ID" value="NM_001079818.3"/>
</dbReference>
<dbReference type="RefSeq" id="NP_001303235.1">
    <molecule id="P23229-7"/>
    <property type="nucleotide sequence ID" value="NM_001316306.2"/>
</dbReference>
<dbReference type="RefSeq" id="NP_001381857.1">
    <molecule id="P23229-1"/>
    <property type="nucleotide sequence ID" value="NM_001394928.1"/>
</dbReference>
<dbReference type="PDB" id="7CEB">
    <property type="method" value="X-ray"/>
    <property type="resolution" value="2.89 A"/>
    <property type="chains" value="A=24-680"/>
</dbReference>
<dbReference type="PDB" id="7CEC">
    <property type="method" value="EM"/>
    <property type="resolution" value="3.90 A"/>
    <property type="chains" value="A=24-680"/>
</dbReference>
<dbReference type="PDBsum" id="7CEB"/>
<dbReference type="PDBsum" id="7CEC"/>
<dbReference type="EMDB" id="EMD-30342"/>
<dbReference type="SMR" id="P23229"/>
<dbReference type="BioGRID" id="109864">
    <property type="interactions" value="187"/>
</dbReference>
<dbReference type="ComplexPortal" id="CPX-1803">
    <property type="entry name" value="Integrin alpha6-beta1 complex"/>
</dbReference>
<dbReference type="ComplexPortal" id="CPX-1822">
    <property type="entry name" value="Integrin alpha6-beta4 complex"/>
</dbReference>
<dbReference type="CORUM" id="P23229"/>
<dbReference type="FunCoup" id="P23229">
    <property type="interactions" value="1504"/>
</dbReference>
<dbReference type="IntAct" id="P23229">
    <property type="interactions" value="78"/>
</dbReference>
<dbReference type="MINT" id="P23229"/>
<dbReference type="STRING" id="9606.ENSP00000386896"/>
<dbReference type="ChEMBL" id="CHEMBL3716"/>
<dbReference type="TCDB" id="8.A.54.1.2">
    <property type="family name" value="the integrin (integrin) family"/>
</dbReference>
<dbReference type="CarbonylDB" id="P23229"/>
<dbReference type="GlyConnect" id="1408">
    <property type="glycosylation" value="20 N-Linked glycans (4 sites)"/>
</dbReference>
<dbReference type="GlyCosmos" id="P23229">
    <property type="glycosylation" value="9 sites, 20 glycans"/>
</dbReference>
<dbReference type="GlyGen" id="P23229">
    <property type="glycosylation" value="15 sites, 83 N-linked glycans (6 sites), 1 O-linked glycan (2 sites)"/>
</dbReference>
<dbReference type="iPTMnet" id="P23229"/>
<dbReference type="PhosphoSitePlus" id="P23229"/>
<dbReference type="SwissPalm" id="P23229"/>
<dbReference type="BioMuta" id="ITGA6"/>
<dbReference type="DMDM" id="519668687"/>
<dbReference type="OGP" id="P23229"/>
<dbReference type="CPTAC" id="CPTAC-528"/>
<dbReference type="CPTAC" id="CPTAC-529"/>
<dbReference type="jPOST" id="P23229"/>
<dbReference type="MassIVE" id="P23229"/>
<dbReference type="PaxDb" id="9606-ENSP00000386896"/>
<dbReference type="PeptideAtlas" id="P23229"/>
<dbReference type="ProteomicsDB" id="33937"/>
<dbReference type="ProteomicsDB" id="54065">
    <molecule id="P23229-1"/>
</dbReference>
<dbReference type="ProteomicsDB" id="54066">
    <molecule id="P23229-2"/>
</dbReference>
<dbReference type="ProteomicsDB" id="54067">
    <molecule id="P23229-3"/>
</dbReference>
<dbReference type="ProteomicsDB" id="54068">
    <molecule id="P23229-4"/>
</dbReference>
<dbReference type="ProteomicsDB" id="54069">
    <molecule id="P23229-5"/>
</dbReference>
<dbReference type="ProteomicsDB" id="54070">
    <molecule id="P23229-6"/>
</dbReference>
<dbReference type="ProteomicsDB" id="54071">
    <molecule id="P23229-7"/>
</dbReference>
<dbReference type="ProteomicsDB" id="54072">
    <molecule id="P23229-9"/>
</dbReference>
<dbReference type="Pumba" id="P23229"/>
<dbReference type="ABCD" id="P23229">
    <property type="antibodies" value="3 sequenced antibodies"/>
</dbReference>
<dbReference type="Antibodypedia" id="1485">
    <property type="antibodies" value="1357 antibodies from 50 providers"/>
</dbReference>
<dbReference type="DNASU" id="3655"/>
<dbReference type="Ensembl" id="ENST00000409080.6">
    <molecule id="P23229-3"/>
    <property type="protein sequence ID" value="ENSP00000386896.1"/>
    <property type="gene ID" value="ENSG00000091409.17"/>
</dbReference>
<dbReference type="Ensembl" id="ENST00000409532.5">
    <molecule id="P23229-7"/>
    <property type="protein sequence ID" value="ENSP00000386614.1"/>
    <property type="gene ID" value="ENSG00000091409.17"/>
</dbReference>
<dbReference type="Ensembl" id="ENST00000442250.6">
    <molecule id="P23229-1"/>
    <property type="protein sequence ID" value="ENSP00000406694.1"/>
    <property type="gene ID" value="ENSG00000091409.17"/>
</dbReference>
<dbReference type="Ensembl" id="ENST00000458358.5">
    <molecule id="P23229-5"/>
    <property type="protein sequence ID" value="ENSP00000394169.1"/>
    <property type="gene ID" value="ENSG00000091409.17"/>
</dbReference>
<dbReference type="Ensembl" id="ENST00000684293.1">
    <molecule id="P23229-2"/>
    <property type="protein sequence ID" value="ENSP00000508249.1"/>
    <property type="gene ID" value="ENSG00000091409.17"/>
</dbReference>
<dbReference type="GeneID" id="3655"/>
<dbReference type="KEGG" id="hsa:3655"/>
<dbReference type="MANE-Select" id="ENST00000684293.1">
    <molecule id="P23229-2"/>
    <property type="protein sequence ID" value="ENSP00000508249.1"/>
    <property type="RefSeq nucleotide sequence ID" value="NM_000210.4"/>
    <property type="RefSeq protein sequence ID" value="NP_000201.2"/>
</dbReference>
<dbReference type="UCSC" id="uc002uho.2">
    <molecule id="P23229-1"/>
    <property type="organism name" value="human"/>
</dbReference>
<dbReference type="AGR" id="HGNC:6142"/>
<dbReference type="CTD" id="3655"/>
<dbReference type="DisGeNET" id="3655"/>
<dbReference type="GeneCards" id="ITGA6"/>
<dbReference type="GeneReviews" id="ITGA6"/>
<dbReference type="HGNC" id="HGNC:6142">
    <property type="gene designation" value="ITGA6"/>
</dbReference>
<dbReference type="HPA" id="ENSG00000091409">
    <property type="expression patterns" value="Low tissue specificity"/>
</dbReference>
<dbReference type="MalaCards" id="ITGA6"/>
<dbReference type="MIM" id="147556">
    <property type="type" value="gene"/>
</dbReference>
<dbReference type="MIM" id="619817">
    <property type="type" value="phenotype"/>
</dbReference>
<dbReference type="neXtProt" id="NX_P23229"/>
<dbReference type="OpenTargets" id="ENSG00000091409"/>
<dbReference type="Orphanet" id="79403">
    <property type="disease" value="Junctional epidermolysis bullosa with pyloric atresia"/>
</dbReference>
<dbReference type="PharmGKB" id="PA29942"/>
<dbReference type="VEuPathDB" id="HostDB:ENSG00000091409"/>
<dbReference type="eggNOG" id="KOG3637">
    <property type="taxonomic scope" value="Eukaryota"/>
</dbReference>
<dbReference type="GeneTree" id="ENSGT00940000155353"/>
<dbReference type="HOGENOM" id="CLU_004111_1_0_1"/>
<dbReference type="InParanoid" id="P23229"/>
<dbReference type="OMA" id="AKKQWIT"/>
<dbReference type="OrthoDB" id="5317514at2759"/>
<dbReference type="PAN-GO" id="P23229">
    <property type="GO annotations" value="8 GO annotations based on evolutionary models"/>
</dbReference>
<dbReference type="PhylomeDB" id="P23229"/>
<dbReference type="TreeFam" id="TF105391"/>
<dbReference type="PathwayCommons" id="P23229"/>
<dbReference type="Reactome" id="R-HSA-2022090">
    <property type="pathway name" value="Assembly of collagen fibrils and other multimeric structures"/>
</dbReference>
<dbReference type="Reactome" id="R-HSA-210991">
    <property type="pathway name" value="Basigin interactions"/>
</dbReference>
<dbReference type="Reactome" id="R-HSA-216083">
    <property type="pathway name" value="Integrin cell surface interactions"/>
</dbReference>
<dbReference type="Reactome" id="R-HSA-3000157">
    <property type="pathway name" value="Laminin interactions"/>
</dbReference>
<dbReference type="Reactome" id="R-HSA-3000170">
    <property type="pathway name" value="Syndecan interactions"/>
</dbReference>
<dbReference type="Reactome" id="R-HSA-446107">
    <property type="pathway name" value="Type I hemidesmosome assembly"/>
</dbReference>
<dbReference type="Reactome" id="R-HSA-9725554">
    <property type="pathway name" value="Differentiation of Keratinocytes in Interfollicular Epidermis in Mammalian Skin"/>
</dbReference>
<dbReference type="SignaLink" id="P23229"/>
<dbReference type="SIGNOR" id="P23229"/>
<dbReference type="BioGRID-ORCS" id="3655">
    <property type="hits" value="23 hits in 1163 CRISPR screens"/>
</dbReference>
<dbReference type="ChiTaRS" id="ITGA6">
    <property type="organism name" value="human"/>
</dbReference>
<dbReference type="GeneWiki" id="ITGA6"/>
<dbReference type="GenomeRNAi" id="3655"/>
<dbReference type="Pharos" id="P23229">
    <property type="development level" value="Tbio"/>
</dbReference>
<dbReference type="PRO" id="PR:P23229"/>
<dbReference type="Proteomes" id="UP000005640">
    <property type="component" value="Chromosome 2"/>
</dbReference>
<dbReference type="RNAct" id="P23229">
    <property type="molecule type" value="protein"/>
</dbReference>
<dbReference type="Bgee" id="ENSG00000091409">
    <property type="expression patterns" value="Expressed in tibial nerve and 220 other cell types or tissues"/>
</dbReference>
<dbReference type="ExpressionAtlas" id="P23229">
    <property type="expression patterns" value="baseline and differential"/>
</dbReference>
<dbReference type="GO" id="GO:0009986">
    <property type="term" value="C:cell surface"/>
    <property type="evidence" value="ECO:0000314"/>
    <property type="project" value="UniProtKB"/>
</dbReference>
<dbReference type="GO" id="GO:0009897">
    <property type="term" value="C:external side of plasma membrane"/>
    <property type="evidence" value="ECO:0000318"/>
    <property type="project" value="GO_Central"/>
</dbReference>
<dbReference type="GO" id="GO:0005925">
    <property type="term" value="C:focal adhesion"/>
    <property type="evidence" value="ECO:0007005"/>
    <property type="project" value="UniProtKB"/>
</dbReference>
<dbReference type="GO" id="GO:0034675">
    <property type="term" value="C:integrin alpha6-beta1 complex"/>
    <property type="evidence" value="ECO:0000353"/>
    <property type="project" value="ComplexPortal"/>
</dbReference>
<dbReference type="GO" id="GO:0008305">
    <property type="term" value="C:integrin complex"/>
    <property type="evidence" value="ECO:0000318"/>
    <property type="project" value="GO_Central"/>
</dbReference>
<dbReference type="GO" id="GO:0005886">
    <property type="term" value="C:plasma membrane"/>
    <property type="evidence" value="ECO:0000314"/>
    <property type="project" value="BHF-UCL"/>
</dbReference>
<dbReference type="GO" id="GO:0045296">
    <property type="term" value="F:cadherin binding"/>
    <property type="evidence" value="ECO:0007005"/>
    <property type="project" value="BHF-UCL"/>
</dbReference>
<dbReference type="GO" id="GO:0031994">
    <property type="term" value="F:insulin-like growth factor I binding"/>
    <property type="evidence" value="ECO:0000314"/>
    <property type="project" value="UniProtKB"/>
</dbReference>
<dbReference type="GO" id="GO:0005178">
    <property type="term" value="F:integrin binding"/>
    <property type="evidence" value="ECO:0000318"/>
    <property type="project" value="GO_Central"/>
</dbReference>
<dbReference type="GO" id="GO:0046872">
    <property type="term" value="F:metal ion binding"/>
    <property type="evidence" value="ECO:0007669"/>
    <property type="project" value="UniProtKB-KW"/>
</dbReference>
<dbReference type="GO" id="GO:0038132">
    <property type="term" value="F:neuregulin binding"/>
    <property type="evidence" value="ECO:0000314"/>
    <property type="project" value="UniProtKB"/>
</dbReference>
<dbReference type="GO" id="GO:0033627">
    <property type="term" value="P:cell adhesion mediated by integrin"/>
    <property type="evidence" value="ECO:0000318"/>
    <property type="project" value="GO_Central"/>
</dbReference>
<dbReference type="GO" id="GO:0098609">
    <property type="term" value="P:cell-cell adhesion"/>
    <property type="evidence" value="ECO:0000318"/>
    <property type="project" value="GO_Central"/>
</dbReference>
<dbReference type="GO" id="GO:0007160">
    <property type="term" value="P:cell-matrix adhesion"/>
    <property type="evidence" value="ECO:0000315"/>
    <property type="project" value="ComplexPortal"/>
</dbReference>
<dbReference type="GO" id="GO:0031589">
    <property type="term" value="P:cell-substrate adhesion"/>
    <property type="evidence" value="ECO:0000315"/>
    <property type="project" value="UniProtKB"/>
</dbReference>
<dbReference type="GO" id="GO:0007044">
    <property type="term" value="P:cell-substrate junction assembly"/>
    <property type="evidence" value="ECO:0000304"/>
    <property type="project" value="ProtInc"/>
</dbReference>
<dbReference type="GO" id="GO:0010668">
    <property type="term" value="P:ectodermal cell differentiation"/>
    <property type="evidence" value="ECO:0000270"/>
    <property type="project" value="UniProtKB"/>
</dbReference>
<dbReference type="GO" id="GO:0007229">
    <property type="term" value="P:integrin-mediated signaling pathway"/>
    <property type="evidence" value="ECO:0000318"/>
    <property type="project" value="GO_Central"/>
</dbReference>
<dbReference type="GO" id="GO:0050900">
    <property type="term" value="P:leukocyte migration"/>
    <property type="evidence" value="ECO:0000318"/>
    <property type="project" value="GO_Central"/>
</dbReference>
<dbReference type="GO" id="GO:0035878">
    <property type="term" value="P:nail development"/>
    <property type="evidence" value="ECO:0000315"/>
    <property type="project" value="UniProtKB"/>
</dbReference>
<dbReference type="GO" id="GO:2001237">
    <property type="term" value="P:negative regulation of extrinsic apoptotic signaling pathway"/>
    <property type="evidence" value="ECO:0000315"/>
    <property type="project" value="BHF-UCL"/>
</dbReference>
<dbReference type="GO" id="GO:0043065">
    <property type="term" value="P:positive regulation of apoptotic process"/>
    <property type="evidence" value="ECO:0000316"/>
    <property type="project" value="MGI"/>
</dbReference>
<dbReference type="GO" id="GO:0030335">
    <property type="term" value="P:positive regulation of cell migration"/>
    <property type="evidence" value="ECO:0000315"/>
    <property type="project" value="BHF-UCL"/>
</dbReference>
<dbReference type="GO" id="GO:0043547">
    <property type="term" value="P:positive regulation of GTPase activity"/>
    <property type="evidence" value="ECO:0000315"/>
    <property type="project" value="UniProtKB"/>
</dbReference>
<dbReference type="GO" id="GO:0010976">
    <property type="term" value="P:positive regulation of neuron projection development"/>
    <property type="evidence" value="ECO:0000250"/>
    <property type="project" value="UniProtKB"/>
</dbReference>
<dbReference type="GO" id="GO:0045944">
    <property type="term" value="P:positive regulation of transcription by RNA polymerase II"/>
    <property type="evidence" value="ECO:0000315"/>
    <property type="project" value="BHF-UCL"/>
</dbReference>
<dbReference type="GO" id="GO:0043589">
    <property type="term" value="P:skin morphogenesis"/>
    <property type="evidence" value="ECO:0000315"/>
    <property type="project" value="UniProtKB"/>
</dbReference>
<dbReference type="FunFam" id="2.130.10.130:FF:000002">
    <property type="entry name" value="integrin alpha-6 isoform X2"/>
    <property type="match status" value="1"/>
</dbReference>
<dbReference type="FunFam" id="2.60.40.1510:FF:000002">
    <property type="entry name" value="integrin alpha-6 isoform X2"/>
    <property type="match status" value="1"/>
</dbReference>
<dbReference type="FunFam" id="2.60.40.1460:FF:000002">
    <property type="entry name" value="Integrin subunit alpha 6"/>
    <property type="match status" value="1"/>
</dbReference>
<dbReference type="FunFam" id="1.20.5.930:FF:000003">
    <property type="entry name" value="Integrin subunit alpha 7"/>
    <property type="match status" value="1"/>
</dbReference>
<dbReference type="FunFam" id="2.60.40.1530:FF:000001">
    <property type="entry name" value="Integrin subunit alpha 7"/>
    <property type="match status" value="1"/>
</dbReference>
<dbReference type="Gene3D" id="1.20.5.930">
    <property type="entry name" value="Bicelle-embedded integrin alpha(iib) transmembrane segment"/>
    <property type="match status" value="1"/>
</dbReference>
<dbReference type="Gene3D" id="2.130.10.130">
    <property type="entry name" value="Integrin alpha, N-terminal"/>
    <property type="match status" value="1"/>
</dbReference>
<dbReference type="Gene3D" id="2.60.40.1460">
    <property type="entry name" value="Integrin domains. Chain A, domain 2"/>
    <property type="match status" value="1"/>
</dbReference>
<dbReference type="Gene3D" id="2.60.40.1510">
    <property type="entry name" value="ntegrin, alpha v. Chain A, domain 3"/>
    <property type="match status" value="1"/>
</dbReference>
<dbReference type="Gene3D" id="2.60.40.1530">
    <property type="entry name" value="ntegrin, alpha v. Chain A, domain 4"/>
    <property type="match status" value="1"/>
</dbReference>
<dbReference type="InterPro" id="IPR013517">
    <property type="entry name" value="FG-GAP"/>
</dbReference>
<dbReference type="InterPro" id="IPR013519">
    <property type="entry name" value="Int_alpha_beta-p"/>
</dbReference>
<dbReference type="InterPro" id="IPR000413">
    <property type="entry name" value="Integrin_alpha"/>
</dbReference>
<dbReference type="InterPro" id="IPR018184">
    <property type="entry name" value="Integrin_alpha_C_CS"/>
</dbReference>
<dbReference type="InterPro" id="IPR013649">
    <property type="entry name" value="Integrin_alpha_Ig-like_1"/>
</dbReference>
<dbReference type="InterPro" id="IPR048285">
    <property type="entry name" value="Integrin_alpha_Ig-like_2"/>
</dbReference>
<dbReference type="InterPro" id="IPR048286">
    <property type="entry name" value="Integrin_alpha_Ig-like_3"/>
</dbReference>
<dbReference type="InterPro" id="IPR028994">
    <property type="entry name" value="Integrin_alpha_N"/>
</dbReference>
<dbReference type="InterPro" id="IPR032695">
    <property type="entry name" value="Integrin_dom_sf"/>
</dbReference>
<dbReference type="PANTHER" id="PTHR23220">
    <property type="entry name" value="INTEGRIN ALPHA"/>
    <property type="match status" value="1"/>
</dbReference>
<dbReference type="PANTHER" id="PTHR23220:SF9">
    <property type="entry name" value="INTEGRIN ALPHA-6"/>
    <property type="match status" value="1"/>
</dbReference>
<dbReference type="Pfam" id="PF01839">
    <property type="entry name" value="FG-GAP"/>
    <property type="match status" value="2"/>
</dbReference>
<dbReference type="Pfam" id="PF08441">
    <property type="entry name" value="Integrin_A_Ig_1"/>
    <property type="match status" value="1"/>
</dbReference>
<dbReference type="Pfam" id="PF20805">
    <property type="entry name" value="Integrin_A_Ig_2"/>
    <property type="match status" value="1"/>
</dbReference>
<dbReference type="Pfam" id="PF20806">
    <property type="entry name" value="Integrin_A_Ig_3"/>
    <property type="match status" value="1"/>
</dbReference>
<dbReference type="PRINTS" id="PR01185">
    <property type="entry name" value="INTEGRINA"/>
</dbReference>
<dbReference type="SMART" id="SM00191">
    <property type="entry name" value="Int_alpha"/>
    <property type="match status" value="5"/>
</dbReference>
<dbReference type="SUPFAM" id="SSF69318">
    <property type="entry name" value="Integrin alpha N-terminal domain"/>
    <property type="match status" value="1"/>
</dbReference>
<dbReference type="SUPFAM" id="SSF69179">
    <property type="entry name" value="Integrin domains"/>
    <property type="match status" value="3"/>
</dbReference>
<dbReference type="PROSITE" id="PS51470">
    <property type="entry name" value="FG_GAP"/>
    <property type="match status" value="7"/>
</dbReference>
<dbReference type="PROSITE" id="PS00242">
    <property type="entry name" value="INTEGRIN_ALPHA"/>
    <property type="match status" value="1"/>
</dbReference>
<organism>
    <name type="scientific">Homo sapiens</name>
    <name type="common">Human</name>
    <dbReference type="NCBI Taxonomy" id="9606"/>
    <lineage>
        <taxon>Eukaryota</taxon>
        <taxon>Metazoa</taxon>
        <taxon>Chordata</taxon>
        <taxon>Craniata</taxon>
        <taxon>Vertebrata</taxon>
        <taxon>Euteleostomi</taxon>
        <taxon>Mammalia</taxon>
        <taxon>Eutheria</taxon>
        <taxon>Euarchontoglires</taxon>
        <taxon>Primates</taxon>
        <taxon>Haplorrhini</taxon>
        <taxon>Catarrhini</taxon>
        <taxon>Hominidae</taxon>
        <taxon>Homo</taxon>
    </lineage>
</organism>
<gene>
    <name type="primary">ITGA6</name>
</gene>
<comment type="function">
    <text evidence="3 16 18 22">Integrin alpha-6/beta-1 (ITGA6:ITGB1) is a receptor for laminin on platelets (By similarity). Integrin alpha-6/beta-1 (ITGA6:ITGB1) is present in oocytes and is involved in sperm-egg fusion (By similarity). Integrin alpha-6/beta-4 (ITGA6:ITGB4) is a receptor for laminin in epithelial cells and it plays a critical structural role in the hemidesmosome (By similarity). ITGA6:ITGB4 binds to NRG1 (via EGF domain) and this binding is essential for NRG1-ERBB signaling (PubMed:20682778). ITGA6:ITGB4 binds to IGF1 and this binding is essential for IGF1 signaling (PubMed:22351760). ITGA6:ITGB4 binds to IGF2 and this binding is essential for IGF2 signaling (PubMed:28873464).</text>
</comment>
<comment type="subunit">
    <text evidence="3 8 9 12 16 18 22">Heterodimer of an alpha and a beta subunit. The alpha subunit is composed of a heavy and a light chain linked by a disulfide bond (By similarity). Alpha-6 associates with either beta-1 (ITGB1) or beta-4 (ITGB4) to form ITGA6:ITGB1 and ITGA6:ITGB4, respectively (By similarity). ITGA6:ITGB1 is found in a complex with CD9; interaction takes place in oocytes and is involved in sperm-egg fusion (By similarity). ITGA6:ITGB4 is found in a ternary complex with NRG1 and ERBB3 (PubMed:20682778). ITGA6:ITGB4 is found in a ternary complex with IGF1 and IGF1R (PubMed:22351760). ITGA6:ITGB4 interacts with IGF2 (PubMed:28873464). Interacts with ADAM9 (By similarity). Interacts with RAB21 (PubMed:16754960). Interacts with MDK (PubMed:15466886). ITGA6:ITGB1 interacts with MDK; this interaction mediates MDK-induced neurite outgrowth (PubMed:15466886). Interacts with CD82; this interaction down-regulates ITGA6-mediated cell adhesion (PubMed:15557282).</text>
</comment>
<comment type="interaction">
    <interactant intactId="EBI-2436548">
        <id>P23229</id>
    </interactant>
    <interactant intactId="EBI-10210332">
        <id>P48509</id>
        <label>CD151</label>
    </interactant>
    <organismsDiffer>false</organismsDiffer>
    <experiments>5</experiments>
</comment>
<comment type="interaction">
    <interactant intactId="EBI-2436548">
        <id>P23229</id>
    </interactant>
    <interactant intactId="EBI-703066">
        <id>P05556</id>
        <label>ITGB1</label>
    </interactant>
    <organismsDiffer>false</organismsDiffer>
    <experiments>2</experiments>
</comment>
<comment type="interaction">
    <interactant intactId="EBI-2436548">
        <id>P23229</id>
    </interactant>
    <interactant intactId="EBI-948678">
        <id>P16144</id>
        <label>ITGB4</label>
    </interactant>
    <organismsDiffer>false</organismsDiffer>
    <experiments>6</experiments>
</comment>
<comment type="subcellular location">
    <subcellularLocation>
        <location evidence="17">Cell membrane</location>
        <topology evidence="4">Single-pass type I membrane protein</topology>
    </subcellularLocation>
    <subcellularLocation>
        <location evidence="17">Cell membrane</location>
        <topology evidence="17">Lipid-anchor</topology>
    </subcellularLocation>
</comment>
<comment type="alternative products">
    <event type="alternative splicing"/>
    <isoform>
        <id>P23229-1</id>
        <name>Alpha-6X1X2B</name>
        <sequence type="displayed"/>
    </isoform>
    <isoform>
        <id>P23229-2</id>
        <name>Alpha-6X1A</name>
        <sequence type="described" ref="VSP_002724 VSP_002725"/>
    </isoform>
    <isoform>
        <id>P23229-3</id>
        <name>Alpha-6X1B</name>
        <sequence type="described" ref="VSP_002724"/>
    </isoform>
    <isoform>
        <id>P23229-4</id>
        <name>Alpha-6X2A</name>
        <sequence type="described" ref="VSP_002723 VSP_002725"/>
    </isoform>
    <isoform>
        <id>P23229-5</id>
        <name>Alpha-6X2B</name>
        <sequence type="described" ref="VSP_002723"/>
    </isoform>
    <isoform>
        <id>P23229-6</id>
        <name>Alpha-6X1X2A</name>
        <sequence type="described" ref="VSP_002725"/>
    </isoform>
    <isoform>
        <id>P23229-7</id>
        <name>7</name>
        <sequence type="described" ref="VSP_036406 VSP_002723 VSP_002725"/>
    </isoform>
    <isoform>
        <id>P23229-9</id>
        <name>9</name>
        <sequence type="described" ref="VSP_036407 VSP_002725"/>
    </isoform>
    <text>Additional isoforms seem to exist. There is a combination of at least four alternatively spliced domains, two extracellular (X1 and X2) and two cytoplasmic (A and B). So far detected are isoform Alpha-6X1A, isoform Alpha-6X1B and isoform Alpha-6X1X2A (minor). Experimental confirmation may be lacking for some isoforms.</text>
</comment>
<comment type="tissue specificity">
    <text evidence="7 23">Integrin alpha-6/beta-4 is predominantly expressed by epithelia. Isoforms containing segment X1 are ubiquitously expressed. Isoforms containing segment X1X2 are expressed in heart, kidney, placenta, colon, duodenum, myoblasts and myotubes, and in a limited number of cell lines; they are always coexpressed with the ubiquitous isoform containing segment X1. In some tissues (e.g. Salivary gland), isoforms containing cytoplasmic segment A and isoforms containing segment B are detected while in others, only isoforms containing one cytoplasmic segment are found (segment A in epidermis and segment B in kidney). Processed integrin alpha-6: Expressed at low levels in normal prostate tissue with elevated levels in prostate cancer tissue (at protein level) (PubMed:15023541).</text>
</comment>
<comment type="PTM">
    <text>Isoforms containing segment A, but not segment B, are the major targets for PMA-induced phosphorylation. Phosphorylation occurs on 'Ser-1103' of isoform alpha-6X1X2A. Phosphorylation is not required for the induction of integrin alpha-6A/beta-1 high affinity but may reduce the affinity for ligand.</text>
</comment>
<comment type="PTM">
    <text evidence="6 7 13">Undergoes PLAU-mediated cleavage at residues Arg-634-635-Arg in a time-dependent manner to produce processed integrin alpha-6 (alpha6p) (PubMed:11359780, PubMed:15023541, PubMed:17303120). Production of alpha6p enhances prostate cancer cell invasion and migration (PubMed:17303120).</text>
</comment>
<comment type="PTM">
    <text evidence="10 17">Palmitoylation by DHHC3 enhances stability and cell surface expression.</text>
</comment>
<comment type="disease" evidence="21 25">
    <disease id="DI-06343">
        <name>Epidermolysis bullosa, junctional 6, with pyloric atresia</name>
        <acronym>JEB6</acronym>
        <description>A form of epidermolysis bullosa, a genodermatosis characterized by recurrent blistering, fragility of the skin and mucosal epithelia, and erosions caused by minor mechanical trauma. JEB6 is an autosomal recessive form in which blistering lesions occur between the epidermis and the dermis at the lamina lucida level of the basement membrane zone. Clinical manifestations include severe blistering, atrophic scarring, nail dystrophy, and pyloric atresia. Congenital absence of skin (aplasia cutis congenita) is common, and ear anomalies are also relatively common. Disease course is usually severe and often lethal in the neonatal period.</description>
        <dbReference type="MIM" id="619817"/>
    </disease>
    <text>The disease is caused by variants affecting the gene represented in this entry.</text>
</comment>
<comment type="similarity">
    <text evidence="30">Belongs to the integrin alpha chain family.</text>
</comment>
<comment type="sequence caution" evidence="30">
    <conflict type="erroneous initiation">
        <sequence resource="EMBL-CDS" id="BAG57680"/>
    </conflict>
    <text>Truncated N-terminus.</text>
</comment>
<keyword id="KW-0002">3D-structure</keyword>
<keyword id="KW-0025">Alternative splicing</keyword>
<keyword id="KW-0106">Calcium</keyword>
<keyword id="KW-0130">Cell adhesion</keyword>
<keyword id="KW-1003">Cell membrane</keyword>
<keyword id="KW-0165">Cleavage on pair of basic residues</keyword>
<keyword id="KW-0903">Direct protein sequencing</keyword>
<keyword id="KW-1015">Disulfide bond</keyword>
<keyword id="KW-0263">Epidermolysis bullosa</keyword>
<keyword id="KW-0325">Glycoprotein</keyword>
<keyword id="KW-0401">Integrin</keyword>
<keyword id="KW-0449">Lipoprotein</keyword>
<keyword id="KW-0472">Membrane</keyword>
<keyword id="KW-0479">Metal-binding</keyword>
<keyword id="KW-0564">Palmitate</keyword>
<keyword id="KW-0597">Phosphoprotein</keyword>
<keyword id="KW-1267">Proteomics identification</keyword>
<keyword id="KW-0675">Receptor</keyword>
<keyword id="KW-1185">Reference proteome</keyword>
<keyword id="KW-0677">Repeat</keyword>
<keyword id="KW-0732">Signal</keyword>
<keyword id="KW-0812">Transmembrane</keyword>
<keyword id="KW-1133">Transmembrane helix</keyword>
<protein>
    <recommendedName>
        <fullName>Integrin alpha-6</fullName>
    </recommendedName>
    <alternativeName>
        <fullName>CD49 antigen-like family member F</fullName>
    </alternativeName>
    <alternativeName>
        <fullName>VLA-6</fullName>
    </alternativeName>
    <cdAntigenName>CD49f</cdAntigenName>
    <component>
        <recommendedName>
            <fullName>Integrin alpha-6 heavy chain</fullName>
        </recommendedName>
    </component>
    <component>
        <recommendedName>
            <fullName>Integrin alpha-6 light chain</fullName>
        </recommendedName>
    </component>
    <component>
        <recommendedName>
            <fullName>Processed integrin alpha-6</fullName>
            <shortName evidence="26">Alpha6p</shortName>
        </recommendedName>
    </component>
</protein>
<evidence type="ECO:0000250" key="1"/>
<evidence type="ECO:0000250" key="2">
    <source>
        <dbReference type="UniProtKB" id="P08648"/>
    </source>
</evidence>
<evidence type="ECO:0000250" key="3">
    <source>
        <dbReference type="UniProtKB" id="Q61739"/>
    </source>
</evidence>
<evidence type="ECO:0000255" key="4"/>
<evidence type="ECO:0000255" key="5">
    <source>
        <dbReference type="PROSITE-ProRule" id="PRU00803"/>
    </source>
</evidence>
<evidence type="ECO:0000269" key="6">
    <source>
    </source>
</evidence>
<evidence type="ECO:0000269" key="7">
    <source>
    </source>
</evidence>
<evidence type="ECO:0000269" key="8">
    <source>
    </source>
</evidence>
<evidence type="ECO:0000269" key="9">
    <source>
    </source>
</evidence>
<evidence type="ECO:0000269" key="10">
    <source>
    </source>
</evidence>
<evidence type="ECO:0000269" key="11">
    <source>
    </source>
</evidence>
<evidence type="ECO:0000269" key="12">
    <source>
    </source>
</evidence>
<evidence type="ECO:0000269" key="13">
    <source>
    </source>
</evidence>
<evidence type="ECO:0000269" key="14">
    <source>
    </source>
</evidence>
<evidence type="ECO:0000269" key="15">
    <source>
    </source>
</evidence>
<evidence type="ECO:0000269" key="16">
    <source>
    </source>
</evidence>
<evidence type="ECO:0000269" key="17">
    <source>
    </source>
</evidence>
<evidence type="ECO:0000269" key="18">
    <source>
    </source>
</evidence>
<evidence type="ECO:0000269" key="19">
    <source>
    </source>
</evidence>
<evidence type="ECO:0000269" key="20">
    <source>
    </source>
</evidence>
<evidence type="ECO:0000269" key="21">
    <source>
    </source>
</evidence>
<evidence type="ECO:0000269" key="22">
    <source>
    </source>
</evidence>
<evidence type="ECO:0000269" key="23">
    <source>
    </source>
</evidence>
<evidence type="ECO:0000269" key="24">
    <source>
    </source>
</evidence>
<evidence type="ECO:0000269" key="25">
    <source>
    </source>
</evidence>
<evidence type="ECO:0000303" key="26">
    <source>
    </source>
</evidence>
<evidence type="ECO:0000303" key="27">
    <source>
    </source>
</evidence>
<evidence type="ECO:0000303" key="28">
    <source>
    </source>
</evidence>
<evidence type="ECO:0000303" key="29">
    <source>
    </source>
</evidence>
<evidence type="ECO:0000305" key="30"/>
<evidence type="ECO:0007829" key="31">
    <source>
        <dbReference type="PDB" id="7CEB"/>
    </source>
</evidence>
<reference key="1">
    <citation type="journal article" date="1990" name="J. Cell Biol.">
        <title>Epithelial integrin alpha 6 beta 4: complete primary structure of alpha 6 and variant forms of beta 4.</title>
        <authorList>
            <person name="Tamura R.N."/>
            <person name="Rozzo C."/>
            <person name="Starr L."/>
            <person name="Chambers J."/>
            <person name="Reichardt L.F."/>
            <person name="Cooper H.M."/>
            <person name="Quaranta V."/>
        </authorList>
    </citation>
    <scope>NUCLEOTIDE SEQUENCE [MRNA] (ISOFORM ALPHA-6X1A)</scope>
    <source>
        <tissue>Pancreas</tissue>
    </source>
</reference>
<reference key="2">
    <citation type="submission" date="1991-06" db="EMBL/GenBank/DDBJ databases">
        <authorList>
            <person name="Quaranta V."/>
        </authorList>
    </citation>
    <scope>SEQUENCE REVISION TO 78 AND 362</scope>
</reference>
<reference key="3">
    <citation type="submission" date="1999-07" db="EMBL/GenBank/DDBJ databases">
        <authorList>
            <person name="Pulkkinen L."/>
            <person name="Uitto J."/>
        </authorList>
    </citation>
    <scope>NUCLEOTIDE SEQUENCE [GENOMIC DNA] (ISOFORM ALPHA-6X1A)</scope>
</reference>
<reference key="4">
    <citation type="journal article" date="2004" name="Nat. Genet.">
        <title>Complete sequencing and characterization of 21,243 full-length human cDNAs.</title>
        <authorList>
            <person name="Ota T."/>
            <person name="Suzuki Y."/>
            <person name="Nishikawa T."/>
            <person name="Otsuki T."/>
            <person name="Sugiyama T."/>
            <person name="Irie R."/>
            <person name="Wakamatsu A."/>
            <person name="Hayashi K."/>
            <person name="Sato H."/>
            <person name="Nagai K."/>
            <person name="Kimura K."/>
            <person name="Makita H."/>
            <person name="Sekine M."/>
            <person name="Obayashi M."/>
            <person name="Nishi T."/>
            <person name="Shibahara T."/>
            <person name="Tanaka T."/>
            <person name="Ishii S."/>
            <person name="Yamamoto J."/>
            <person name="Saito K."/>
            <person name="Kawai Y."/>
            <person name="Isono Y."/>
            <person name="Nakamura Y."/>
            <person name="Nagahari K."/>
            <person name="Murakami K."/>
            <person name="Yasuda T."/>
            <person name="Iwayanagi T."/>
            <person name="Wagatsuma M."/>
            <person name="Shiratori A."/>
            <person name="Sudo H."/>
            <person name="Hosoiri T."/>
            <person name="Kaku Y."/>
            <person name="Kodaira H."/>
            <person name="Kondo H."/>
            <person name="Sugawara M."/>
            <person name="Takahashi M."/>
            <person name="Kanda K."/>
            <person name="Yokoi T."/>
            <person name="Furuya T."/>
            <person name="Kikkawa E."/>
            <person name="Omura Y."/>
            <person name="Abe K."/>
            <person name="Kamihara K."/>
            <person name="Katsuta N."/>
            <person name="Sato K."/>
            <person name="Tanikawa M."/>
            <person name="Yamazaki M."/>
            <person name="Ninomiya K."/>
            <person name="Ishibashi T."/>
            <person name="Yamashita H."/>
            <person name="Murakawa K."/>
            <person name="Fujimori K."/>
            <person name="Tanai H."/>
            <person name="Kimata M."/>
            <person name="Watanabe M."/>
            <person name="Hiraoka S."/>
            <person name="Chiba Y."/>
            <person name="Ishida S."/>
            <person name="Ono Y."/>
            <person name="Takiguchi S."/>
            <person name="Watanabe S."/>
            <person name="Yosida M."/>
            <person name="Hotuta T."/>
            <person name="Kusano J."/>
            <person name="Kanehori K."/>
            <person name="Takahashi-Fujii A."/>
            <person name="Hara H."/>
            <person name="Tanase T.-O."/>
            <person name="Nomura Y."/>
            <person name="Togiya S."/>
            <person name="Komai F."/>
            <person name="Hara R."/>
            <person name="Takeuchi K."/>
            <person name="Arita M."/>
            <person name="Imose N."/>
            <person name="Musashino K."/>
            <person name="Yuuki H."/>
            <person name="Oshima A."/>
            <person name="Sasaki N."/>
            <person name="Aotsuka S."/>
            <person name="Yoshikawa Y."/>
            <person name="Matsunawa H."/>
            <person name="Ichihara T."/>
            <person name="Shiohata N."/>
            <person name="Sano S."/>
            <person name="Moriya S."/>
            <person name="Momiyama H."/>
            <person name="Satoh N."/>
            <person name="Takami S."/>
            <person name="Terashima Y."/>
            <person name="Suzuki O."/>
            <person name="Nakagawa S."/>
            <person name="Senoh A."/>
            <person name="Mizoguchi H."/>
            <person name="Goto Y."/>
            <person name="Shimizu F."/>
            <person name="Wakebe H."/>
            <person name="Hishigaki H."/>
            <person name="Watanabe T."/>
            <person name="Sugiyama A."/>
            <person name="Takemoto M."/>
            <person name="Kawakami B."/>
            <person name="Yamazaki M."/>
            <person name="Watanabe K."/>
            <person name="Kumagai A."/>
            <person name="Itakura S."/>
            <person name="Fukuzumi Y."/>
            <person name="Fujimori Y."/>
            <person name="Komiyama M."/>
            <person name="Tashiro H."/>
            <person name="Tanigami A."/>
            <person name="Fujiwara T."/>
            <person name="Ono T."/>
            <person name="Yamada K."/>
            <person name="Fujii Y."/>
            <person name="Ozaki K."/>
            <person name="Hirao M."/>
            <person name="Ohmori Y."/>
            <person name="Kawabata A."/>
            <person name="Hikiji T."/>
            <person name="Kobatake N."/>
            <person name="Inagaki H."/>
            <person name="Ikema Y."/>
            <person name="Okamoto S."/>
            <person name="Okitani R."/>
            <person name="Kawakami T."/>
            <person name="Noguchi S."/>
            <person name="Itoh T."/>
            <person name="Shigeta K."/>
            <person name="Senba T."/>
            <person name="Matsumura K."/>
            <person name="Nakajima Y."/>
            <person name="Mizuno T."/>
            <person name="Morinaga M."/>
            <person name="Sasaki M."/>
            <person name="Togashi T."/>
            <person name="Oyama M."/>
            <person name="Hata H."/>
            <person name="Watanabe M."/>
            <person name="Komatsu T."/>
            <person name="Mizushima-Sugano J."/>
            <person name="Satoh T."/>
            <person name="Shirai Y."/>
            <person name="Takahashi Y."/>
            <person name="Nakagawa K."/>
            <person name="Okumura K."/>
            <person name="Nagase T."/>
            <person name="Nomura N."/>
            <person name="Kikuchi H."/>
            <person name="Masuho Y."/>
            <person name="Yamashita R."/>
            <person name="Nakai K."/>
            <person name="Yada T."/>
            <person name="Nakamura Y."/>
            <person name="Ohara O."/>
            <person name="Isogai T."/>
            <person name="Sugano S."/>
        </authorList>
    </citation>
    <scope>NUCLEOTIDE SEQUENCE [LARGE SCALE MRNA] (ISOFORM 7)</scope>
    <scope>NUCLEOTIDE SEQUENCE [LARGE SCALE MRNA] OF 266-1130 (ISOFORM ALPHA-6X1X2A)</scope>
    <source>
        <tissue>Amygdala</tissue>
        <tissue>Thalamus</tissue>
    </source>
</reference>
<reference key="5">
    <citation type="journal article" date="2005" name="Nature">
        <title>Generation and annotation of the DNA sequences of human chromosomes 2 and 4.</title>
        <authorList>
            <person name="Hillier L.W."/>
            <person name="Graves T.A."/>
            <person name="Fulton R.S."/>
            <person name="Fulton L.A."/>
            <person name="Pepin K.H."/>
            <person name="Minx P."/>
            <person name="Wagner-McPherson C."/>
            <person name="Layman D."/>
            <person name="Wylie K."/>
            <person name="Sekhon M."/>
            <person name="Becker M.C."/>
            <person name="Fewell G.A."/>
            <person name="Delehaunty K.D."/>
            <person name="Miner T.L."/>
            <person name="Nash W.E."/>
            <person name="Kremitzki C."/>
            <person name="Oddy L."/>
            <person name="Du H."/>
            <person name="Sun H."/>
            <person name="Bradshaw-Cordum H."/>
            <person name="Ali J."/>
            <person name="Carter J."/>
            <person name="Cordes M."/>
            <person name="Harris A."/>
            <person name="Isak A."/>
            <person name="van Brunt A."/>
            <person name="Nguyen C."/>
            <person name="Du F."/>
            <person name="Courtney L."/>
            <person name="Kalicki J."/>
            <person name="Ozersky P."/>
            <person name="Abbott S."/>
            <person name="Armstrong J."/>
            <person name="Belter E.A."/>
            <person name="Caruso L."/>
            <person name="Cedroni M."/>
            <person name="Cotton M."/>
            <person name="Davidson T."/>
            <person name="Desai A."/>
            <person name="Elliott G."/>
            <person name="Erb T."/>
            <person name="Fronick C."/>
            <person name="Gaige T."/>
            <person name="Haakenson W."/>
            <person name="Haglund K."/>
            <person name="Holmes A."/>
            <person name="Harkins R."/>
            <person name="Kim K."/>
            <person name="Kruchowski S.S."/>
            <person name="Strong C.M."/>
            <person name="Grewal N."/>
            <person name="Goyea E."/>
            <person name="Hou S."/>
            <person name="Levy A."/>
            <person name="Martinka S."/>
            <person name="Mead K."/>
            <person name="McLellan M.D."/>
            <person name="Meyer R."/>
            <person name="Randall-Maher J."/>
            <person name="Tomlinson C."/>
            <person name="Dauphin-Kohlberg S."/>
            <person name="Kozlowicz-Reilly A."/>
            <person name="Shah N."/>
            <person name="Swearengen-Shahid S."/>
            <person name="Snider J."/>
            <person name="Strong J.T."/>
            <person name="Thompson J."/>
            <person name="Yoakum M."/>
            <person name="Leonard S."/>
            <person name="Pearman C."/>
            <person name="Trani L."/>
            <person name="Radionenko M."/>
            <person name="Waligorski J.E."/>
            <person name="Wang C."/>
            <person name="Rock S.M."/>
            <person name="Tin-Wollam A.-M."/>
            <person name="Maupin R."/>
            <person name="Latreille P."/>
            <person name="Wendl M.C."/>
            <person name="Yang S.-P."/>
            <person name="Pohl C."/>
            <person name="Wallis J.W."/>
            <person name="Spieth J."/>
            <person name="Bieri T.A."/>
            <person name="Berkowicz N."/>
            <person name="Nelson J.O."/>
            <person name="Osborne J."/>
            <person name="Ding L."/>
            <person name="Meyer R."/>
            <person name="Sabo A."/>
            <person name="Shotland Y."/>
            <person name="Sinha P."/>
            <person name="Wohldmann P.E."/>
            <person name="Cook L.L."/>
            <person name="Hickenbotham M.T."/>
            <person name="Eldred J."/>
            <person name="Williams D."/>
            <person name="Jones T.A."/>
            <person name="She X."/>
            <person name="Ciccarelli F.D."/>
            <person name="Izaurralde E."/>
            <person name="Taylor J."/>
            <person name="Schmutz J."/>
            <person name="Myers R.M."/>
            <person name="Cox D.R."/>
            <person name="Huang X."/>
            <person name="McPherson J.D."/>
            <person name="Mardis E.R."/>
            <person name="Clifton S.W."/>
            <person name="Warren W.C."/>
            <person name="Chinwalla A.T."/>
            <person name="Eddy S.R."/>
            <person name="Marra M.A."/>
            <person name="Ovcharenko I."/>
            <person name="Furey T.S."/>
            <person name="Miller W."/>
            <person name="Eichler E.E."/>
            <person name="Bork P."/>
            <person name="Suyama M."/>
            <person name="Torrents D."/>
            <person name="Waterston R.H."/>
            <person name="Wilson R.K."/>
        </authorList>
    </citation>
    <scope>NUCLEOTIDE SEQUENCE [LARGE SCALE GENOMIC DNA]</scope>
</reference>
<reference key="6">
    <citation type="submission" date="2005-09" db="EMBL/GenBank/DDBJ databases">
        <authorList>
            <person name="Mural R.J."/>
            <person name="Istrail S."/>
            <person name="Sutton G.G."/>
            <person name="Florea L."/>
            <person name="Halpern A.L."/>
            <person name="Mobarry C.M."/>
            <person name="Lippert R."/>
            <person name="Walenz B."/>
            <person name="Shatkay H."/>
            <person name="Dew I."/>
            <person name="Miller J.R."/>
            <person name="Flanigan M.J."/>
            <person name="Edwards N.J."/>
            <person name="Bolanos R."/>
            <person name="Fasulo D."/>
            <person name="Halldorsson B.V."/>
            <person name="Hannenhalli S."/>
            <person name="Turner R."/>
            <person name="Yooseph S."/>
            <person name="Lu F."/>
            <person name="Nusskern D.R."/>
            <person name="Shue B.C."/>
            <person name="Zheng X.H."/>
            <person name="Zhong F."/>
            <person name="Delcher A.L."/>
            <person name="Huson D.H."/>
            <person name="Kravitz S.A."/>
            <person name="Mouchard L."/>
            <person name="Reinert K."/>
            <person name="Remington K.A."/>
            <person name="Clark A.G."/>
            <person name="Waterman M.S."/>
            <person name="Eichler E.E."/>
            <person name="Adams M.D."/>
            <person name="Hunkapiller M.W."/>
            <person name="Myers E.W."/>
            <person name="Venter J.C."/>
        </authorList>
    </citation>
    <scope>NUCLEOTIDE SEQUENCE [LARGE SCALE GENOMIC DNA]</scope>
</reference>
<reference key="7">
    <citation type="journal article" date="2004" name="Genome Res.">
        <title>The status, quality, and expansion of the NIH full-length cDNA project: the Mammalian Gene Collection (MGC).</title>
        <authorList>
            <consortium name="The MGC Project Team"/>
        </authorList>
    </citation>
    <scope>NUCLEOTIDE SEQUENCE [LARGE SCALE MRNA] (ISOFORM ALPHA-6X1A)</scope>
    <scope>NUCLEOTIDE SEQUENCE [LARGE SCALE MRNA] OF 412-1130 (ISOFORM 9)</scope>
    <source>
        <tissue>Brain</tissue>
        <tissue>Skin</tissue>
    </source>
</reference>
<reference key="8">
    <citation type="journal article" date="1991" name="Eur. J. Biochem.">
        <title>Molecular cloning of the human alpha 6 integrin subunit. Alternative splicing of alpha 6 mRNA and chromosomal localization of the alpha 6 and beta 4 genes.</title>
        <authorList>
            <person name="Hogervorst F."/>
            <person name="Kuikman I."/>
            <person name="Geurts van Kessel A."/>
            <person name="Sonnenberg A."/>
        </authorList>
    </citation>
    <scope>PARTIAL NUCLEOTIDE SEQUENCE [MRNA] (ISOFORM ALPHA-6X1A)</scope>
    <source>
        <tissue>Keratinocyte</tissue>
    </source>
</reference>
<reference key="9">
    <citation type="journal article" date="1991" name="Proc. Natl. Acad. Sci. U.S.A.">
        <title>Cell type-specific integrin variants with alternative alpha chain cytoplasmic domains.</title>
        <authorList>
            <person name="Tamura R.N."/>
            <person name="Cooper H.M."/>
            <person name="Collo G."/>
            <person name="Quaranta V."/>
        </authorList>
    </citation>
    <scope>PARTIAL NUCLEOTIDE SEQUENCE [MRNA] (ISOFORMS ALPHA-6X1A AND ALPHA-6X1B)</scope>
</reference>
<reference key="10">
    <citation type="journal article" date="1992" name="BioTechniques">
        <title>An efficient and reliable method for cloning PCR-amplification products: a survey of point mutations in integrin cDNA.</title>
        <authorList>
            <person name="Starr L."/>
            <person name="Quaranta V."/>
        </authorList>
    </citation>
    <scope>NUCLEOTIDE SEQUENCE [GENOMIC DNA] OF 748-849</scope>
</reference>
<reference key="11">
    <citation type="journal article" date="1993" name="J. Biol. Chem.">
        <title>Inside-out integrin signaling in macrophages. Analysis of the role of the alpha 6A beta 1 and alpha 6B beta 1 integrin variants in laminin adhesion by cDNA expression in an alpha 6 integrin-deficient macrophage cell line.</title>
        <authorList>
            <person name="Shaw L.M."/>
            <person name="Lotz M.M."/>
            <person name="Mercurio A.M."/>
        </authorList>
    </citation>
    <scope>PARTIAL NUCLEOTIDE SEQUENCE [MRNA] (ISOFORM ALPHA-6X1A)</scope>
</reference>
<reference key="12">
    <citation type="journal article" date="1993" name="J. Biol. Chem.">
        <title>Alternative extracellular and cytoplasmic domains of the integrin alpha 7 subunit are differentially expressed during development.</title>
        <authorList>
            <person name="Ziober B.L."/>
            <person name="Vu M.P."/>
            <person name="Waleh N."/>
            <person name="Crawford J."/>
            <person name="Lin C.-S."/>
            <person name="Kramer R.H."/>
        </authorList>
    </citation>
    <scope>PARTIAL NUCLEOTIDE SEQUENCE [GENOMIC DNA]</scope>
    <source>
        <tissue>Leukocyte</tissue>
    </source>
</reference>
<reference key="13">
    <citation type="journal article" date="1995" name="Cell Adhes. Commun.">
        <title>An alternatively spliced exon in the extracellular domain of the human alpha 6 integrin subunit -- functional analysis of the alpha 6 integrin variants.</title>
        <authorList>
            <person name="Delwel G.O."/>
            <person name="Kuikman I."/>
            <person name="Sonnenberg A."/>
        </authorList>
    </citation>
    <scope>PARTIAL NUCLEOTIDE SEQUENCE [GENOMIC DNA]</scope>
    <source>
        <tissue>Lymphoma</tissue>
    </source>
</reference>
<reference key="14">
    <citation type="submission" date="2005-03" db="EMBL/GenBank/DDBJ databases">
        <authorList>
            <person name="Totoki Y."/>
            <person name="Toyoda A."/>
            <person name="Takeda T."/>
            <person name="Sakaki Y."/>
            <person name="Tanaka A."/>
            <person name="Yokoyama S."/>
            <person name="Ohara O."/>
            <person name="Nagase T."/>
            <person name="Kikuno R.F."/>
        </authorList>
    </citation>
    <scope>NUCLEOTIDE SEQUENCE [LARGE SCALE MRNA] OF 565-1130 (ISOFORM ALPHA-6X1X2B)</scope>
    <source>
        <tissue>Brain</tissue>
    </source>
</reference>
<reference key="15">
    <citation type="journal article" date="1989" name="J. Biol. Chem.">
        <title>Association of the VLA alpha 6 subunit with a novel protein. A possible alternative to the common VLA beta 1 subunit on certain cell lines.</title>
        <authorList>
            <person name="Hemler M.E."/>
            <person name="Crouse C."/>
            <person name="Sonnenberg A."/>
        </authorList>
    </citation>
    <scope>PROTEIN SEQUENCE OF 24-44</scope>
</reference>
<reference key="16">
    <citation type="journal article" date="1989" name="EMBO J.">
        <title>A novel integrin (alpha E beta 4) from human epithelial cells suggests a fourth family of integrin adhesion receptors.</title>
        <authorList>
            <person name="Kajiji S."/>
            <person name="Tamura R.N."/>
            <person name="Quaranta V."/>
        </authorList>
    </citation>
    <scope>PROTEIN SEQUENCE OF 24-46</scope>
</reference>
<reference key="17">
    <citation type="journal article" date="1991" name="Biochem. J.">
        <title>Separation of important new platelet glycoproteins (GPIa, GPIc, GPIc*, GPIIa and GMP-140) by F.P.L.C. Characterization by monoclonal antibodies and gas-phase sequencing.</title>
        <authorList>
            <person name="Catimel B."/>
            <person name="Parmentier S."/>
            <person name="Leung L.L."/>
            <person name="McGregor J.L."/>
        </authorList>
    </citation>
    <scope>PROTEIN SEQUENCE OF 24-36</scope>
    <source>
        <tissue>Platelet</tissue>
    </source>
</reference>
<reference key="18">
    <citation type="submission" date="2006-07" db="EMBL/GenBank/DDBJ databases">
        <title>Integrin alpha6Abeta4 in human colon cancer.</title>
        <authorList>
            <person name="Dydensborg A.B."/>
            <person name="Herring E."/>
            <person name="Beaulieu J.-F."/>
        </authorList>
    </citation>
    <scope>NUCLEOTIDE SEQUENCE [MRNA] OF 1001-1130</scope>
</reference>
<reference key="19">
    <citation type="journal article" date="1993" name="J. Biol. Chem.">
        <title>The role of phosphorylation in activation of the alpha 6A beta 1 laminin receptor.</title>
        <authorList>
            <person name="Hogervorst F."/>
            <person name="Kuikman I."/>
            <person name="Noteboom E."/>
            <person name="Sonnenberg A."/>
        </authorList>
    </citation>
    <scope>PHOSPHORYLATION AT SER-1059 (ISOFORM ALPHA-6X2A)</scope>
    <scope>PHOSPHORYLATION AT SER-1064 (ISOFORM ALPHA-6X1A)</scope>
    <scope>PHOSPHORYLATION AT SER-1103 (ISOFORM ALPHA-6X1X2A)</scope>
</reference>
<reference key="20">
    <citation type="journal article" date="1993" name="J. Cell Biol.">
        <title>Biochemical characterization and tissue distribution of the A and B variants of the integrin alpha 6 subunit.</title>
        <authorList>
            <person name="Hogervorst F."/>
            <person name="Admiraal L.G."/>
            <person name="Niessen C."/>
            <person name="Kuikman I."/>
            <person name="Janssen H."/>
            <person name="Daams H."/>
            <person name="Sonnenberg A."/>
        </authorList>
    </citation>
    <scope>CHARACTERIZATION</scope>
    <scope>TISSUE SPECIFICITY</scope>
</reference>
<reference key="21">
    <citation type="journal article" date="1997" name="J. Clin. Invest.">
        <title>A homozygous mutation in the integrin alpha6 gene in junctional epidermolysis bullosa with pyloric atresia.</title>
        <authorList>
            <person name="Ruzzi L."/>
            <person name="Gagnoux-Palacios L."/>
            <person name="Pinola M."/>
            <person name="Belli S."/>
            <person name="Meneguzzi G."/>
            <person name="D'Alessio M."/>
            <person name="Zambruno G."/>
        </authorList>
    </citation>
    <scope>INVOLVEMENT IN JEB6</scope>
</reference>
<reference key="22">
    <citation type="journal article" date="2001" name="J. Biol. Chem.">
        <title>Identification of a novel structural variant of the alpha 6 integrin.</title>
        <authorList>
            <person name="Davis T.L."/>
            <person name="Rabinovitz I."/>
            <person name="Futscher B.W."/>
            <person name="Schnoelzer M."/>
            <person name="Burger F."/>
            <person name="Liu Y."/>
            <person name="Kulesz-Martin M."/>
            <person name="Cress A.E."/>
        </authorList>
    </citation>
    <scope>IDENTIFICATION BY MASS SPECTROMETRY</scope>
    <scope>PROTEOLYTIC PROCESSING</scope>
</reference>
<reference key="23">
    <citation type="journal article" date="2004" name="Exp. Cell Res.">
        <title>Extracellular alpha 6 integrin cleavage by urokinase-type plasminogen activator in human prostate cancer.</title>
        <authorList>
            <person name="Demetriou M.C."/>
            <person name="Pennington M.E."/>
            <person name="Nagle R.B."/>
            <person name="Cress A.E."/>
        </authorList>
    </citation>
    <scope>PROTEOLYTIC PROCESSING</scope>
    <scope>TISSUE SPECIFICITY</scope>
</reference>
<reference key="24">
    <citation type="journal article" date="2004" name="J. Cell Biol.">
        <title>Palmitoylation supports assembly and function of integrin-tetraspanin complexes.</title>
        <authorList>
            <person name="Yang X."/>
            <person name="Kovalenko O.V."/>
            <person name="Tang W."/>
            <person name="Claas C."/>
            <person name="Stipp C.S."/>
            <person name="Hemler M.E."/>
        </authorList>
    </citation>
    <scope>PALMITOYLATION AT CYS-1078</scope>
</reference>
<reference key="25">
    <citation type="journal article" date="2004" name="J. Cell Sci.">
        <title>alpha4beta1- and alpha6beta1-integrins are functional receptors for midkine, a heparin-binding growth factor.</title>
        <authorList>
            <person name="Muramatsu H."/>
            <person name="Zou P."/>
            <person name="Suzuki H."/>
            <person name="Oda Y."/>
            <person name="Chen G.Y."/>
            <person name="Sakaguchi N."/>
            <person name="Sakuma S."/>
            <person name="Maeda N."/>
            <person name="Noda M."/>
            <person name="Takada Y."/>
            <person name="Muramatsu T."/>
        </authorList>
    </citation>
    <scope>INTERACTION WITH MDK</scope>
</reference>
<reference key="26">
    <citation type="journal article" date="2005" name="J. Biol. Chem.">
        <title>Tetraspanin CD82 attenuates cellular morphogenesis through down-regulating integrin alpha6-mediated cell adhesion.</title>
        <authorList>
            <person name="He B."/>
            <person name="Liu L."/>
            <person name="Cook G.A."/>
            <person name="Grgurevich S."/>
            <person name="Jennings L.K."/>
            <person name="Zhang X.A."/>
        </authorList>
    </citation>
    <scope>INTERACTION WITH CD82</scope>
</reference>
<reference key="27">
    <citation type="journal article" date="2006" name="J. Cell Biol.">
        <title>Small GTPase Rab21 regulates cell adhesion and controls endosomal traffic of beta1-integrins.</title>
        <authorList>
            <person name="Pellinen T."/>
            <person name="Arjonen A."/>
            <person name="Vuoriluoto K."/>
            <person name="Kallio K."/>
            <person name="Fransen J.A.M."/>
            <person name="Ivaska J."/>
        </authorList>
    </citation>
    <scope>INTERACTION WITH RAB21</scope>
</reference>
<reference key="28">
    <citation type="journal article" date="2006" name="Mol. Cell. Proteomics">
        <title>Elucidation of N-glycosylation sites on human platelet proteins: a glycoproteomic approach.</title>
        <authorList>
            <person name="Lewandrowski U."/>
            <person name="Moebius J."/>
            <person name="Walter U."/>
            <person name="Sickmann A."/>
        </authorList>
    </citation>
    <scope>GLYCOSYLATION [LARGE SCALE ANALYSIS] AT ASN-323</scope>
    <source>
        <tissue>Platelet</tissue>
    </source>
</reference>
<reference key="29">
    <citation type="journal article" date="2009" name="J. Proteome Res.">
        <title>Glycoproteomics analysis of human liver tissue by combination of multiple enzyme digestion and hydrazide chemistry.</title>
        <authorList>
            <person name="Chen R."/>
            <person name="Jiang X."/>
            <person name="Sun D."/>
            <person name="Han G."/>
            <person name="Wang F."/>
            <person name="Ye M."/>
            <person name="Wang L."/>
            <person name="Zou H."/>
        </authorList>
    </citation>
    <scope>GLYCOSYLATION [LARGE SCALE ANALYSIS] AT ASN-997</scope>
    <source>
        <tissue>Liver</tissue>
    </source>
</reference>
<reference key="30">
    <citation type="journal article" date="2007" name="Exp. Cell Res.">
        <title>Integrin alpha6 cleavage: a novel modification to modulate cell migration.</title>
        <authorList>
            <person name="Pawar S.C."/>
            <person name="Demetriou M.C."/>
            <person name="Nagle R.B."/>
            <person name="Bowden G.T."/>
            <person name="Cress A.E."/>
        </authorList>
    </citation>
    <scope>PROTEOLYTIC PROCESSING</scope>
</reference>
<reference key="31">
    <citation type="journal article" date="2010" name="J. Biol. Chem.">
        <title>Direct binding of the EGF-like domain of neuregulin-1 to integrins ({alpha}v{beta}3 and {alpha}6{beta}4) is involved in neuregulin-1/ErbB signaling.</title>
        <authorList>
            <person name="Ieguchi K."/>
            <person name="Fujita M."/>
            <person name="Ma Z."/>
            <person name="Davari P."/>
            <person name="Taniguchi Y."/>
            <person name="Sekiguchi K."/>
            <person name="Wang B."/>
            <person name="Takada Y.K."/>
            <person name="Takada Y."/>
        </authorList>
    </citation>
    <scope>FUNCTION</scope>
    <scope>BINDING TO NRG1</scope>
    <scope>IDENTIFICATION IN A COMPLEX WITH NRG1 AND ERBB3</scope>
</reference>
<reference key="32">
    <citation type="journal article" date="2011" name="BMC Syst. Biol.">
        <title>Initial characterization of the human central proteome.</title>
        <authorList>
            <person name="Burkard T.R."/>
            <person name="Planyavsky M."/>
            <person name="Kaupe I."/>
            <person name="Breitwieser F.P."/>
            <person name="Buerckstuemmer T."/>
            <person name="Bennett K.L."/>
            <person name="Superti-Furga G."/>
            <person name="Colinge J."/>
        </authorList>
    </citation>
    <scope>IDENTIFICATION BY MASS SPECTROMETRY [LARGE SCALE ANALYSIS]</scope>
</reference>
<reference key="33">
    <citation type="journal article" date="2012" name="Cell. Mol. Life Sci.">
        <title>Palmitoylation by DHHC3 is critical for the function, expression, and stability of integrin alpha6beta4.</title>
        <authorList>
            <person name="Sharma C."/>
            <person name="Rabinovitz I."/>
            <person name="Hemler M.E."/>
        </authorList>
    </citation>
    <scope>PALMITOYLATION AT CYS-1078 BY DHHC3</scope>
    <scope>SUBCELLULAR LOCATION</scope>
</reference>
<reference key="34">
    <citation type="journal article" date="2012" name="J. Biol. Chem.">
        <title>Cross-talk between integrin alpha6beta4 and insulin-like growth factor-1 receptor (IGF1R) through direct alpha6beta4 binding to IGF1 and subsequent alpha6beta4-IGF1-IGF1R ternary complex formation in anchorage-independent conditions.</title>
        <authorList>
            <person name="Fujita M."/>
            <person name="Ieguchi K."/>
            <person name="Davari P."/>
            <person name="Yamaji S."/>
            <person name="Taniguchi Y."/>
            <person name="Sekiguchi K."/>
            <person name="Takada Y.K."/>
            <person name="Takada Y."/>
        </authorList>
    </citation>
    <scope>FUNCTION</scope>
    <scope>BINDING TO IGF1</scope>
    <scope>IDENTIFICATION IN A COMPLEX WITH IGF1 AND IGF1R</scope>
</reference>
<reference key="35">
    <citation type="journal article" date="2015" name="Proteomics">
        <title>N-terminome analysis of the human mitochondrial proteome.</title>
        <authorList>
            <person name="Vaca Jacome A.S."/>
            <person name="Rabilloud T."/>
            <person name="Schaeffer-Reiss C."/>
            <person name="Rompais M."/>
            <person name="Ayoub D."/>
            <person name="Lane L."/>
            <person name="Bairoch A."/>
            <person name="Van Dorsselaer A."/>
            <person name="Carapito C."/>
        </authorList>
    </citation>
    <scope>IDENTIFICATION BY MASS SPECTROMETRY [LARGE SCALE ANALYSIS]</scope>
</reference>
<reference key="36">
    <citation type="journal article" date="2017" name="J. Dermatol.">
        <title>Compound heterozygosity for novel splice site mutations of ITGA6 in lethal junctional epidermolysis bullosa with pyloric atresia.</title>
        <authorList>
            <person name="Masunaga T."/>
            <person name="Ogawa J."/>
            <person name="Akiyama M."/>
            <person name="Nishikawa T."/>
            <person name="Shimizu H."/>
            <person name="Ishiko A."/>
        </authorList>
    </citation>
    <scope>INVOLVEMENT IN JEB6</scope>
</reference>
<reference key="37">
    <citation type="journal article" date="2017" name="PLoS ONE">
        <title>Direct integrin binding to insulin-like growth factor-2 through the C-domain is required for insulin-like growth factor receptor type 1 (IGF1R) signaling.</title>
        <authorList>
            <person name="Cedano Prieto D.M."/>
            <person name="Cheng Y."/>
            <person name="Chang C.C."/>
            <person name="Yu J."/>
            <person name="Takada Y.K."/>
            <person name="Takada Y."/>
        </authorList>
    </citation>
    <scope>FUNCTION</scope>
    <scope>INTERACTION WITH IGF2</scope>
</reference>
<sequence length="1130" mass="126606">MAAAGQLCLLYLSAGLLSRLGAAFNLDTREDNVIRKYGDPGSLFGFSLAMHWQLQPEDKRLLLVGAPRAEALPLQRANRTGGLYSCDITARGPCTRIEFDNDADPTSESKEDQWMGVTVQSQGPGGKVVTCAHRYEKRQHVNTKQESRDIFGRCYVLSQNLRIEDDMDGGDWSFCDGRLRGHEKFGSCQQGVAATFTKDFHYIVFGAPGTYNWKGIVRVEQKNNTFFDMNIFEDGPYEVGGETEHDESLVPVPANSYLGLLFLTSVSYTDPDQFVYKTRPPREQPDTFPDVMMNSYLGFSLDSGKGIVSKDEITFVSGAPRANHSGAVVLLKRDMKSAHLLPEHIFDGEGLASSFGYDVAVVDLNKDGWQDIVIGAPQYFDRDGEVGGAVYVYMNQQGRWNNVKPIRLNGTKDSMFGIAVKNIGDINQDGYPDIAVGAPYDDLGKVFIYHGSANGINTKPTQVLKGISPYFGYSIAGNMDLDRNSYPDVAVGSLSDSVTIFRSRPVINIQKTITVTPNRIDLRQKTACGAPSGICLQVKSCFEYTANPAGYNPSISIVGTLEAEKERRKSGLSSRVQFRNQGSEPKYTQELTLKRQKQKVCMEETLWLQDNIRDKLRPIPITASVEIQEPSSRRRVNSLPEVLPILNSDEPKTAHIDVHFLKEGCGDDNVCNSNLKLEYKFCTREGNQDKFSYLPIQKGVPELVLKDQKDIALEITVTNSPSNPRNPTKDGDDAHEAKLIATFPDTLTYSAYRELRAFPEKQLSCVANQNGSQADCELGNPFKRNSNVTFYLVLSTTEVTFDTPDLDINLKLETTSNQDNLAPITAKAKVVIELLLSVSGVAKPSQVYFGGTVVGEQAMKSEDEVGSLIEYEFRVINLGKPLTNLGTATLNIQWPKEISNGKWLLYLVKVESKGLEKVTCEPQKEINSLNLTESHNSRKKREITEKQIDDNRKFSLFAERKYQTLNCSVNVNCVNIRCPLRGLDSKASLILRSRLWNSTFLEEYSKLNYLDILMRAFIDVTAAAENIRLPNAGTQVRVTVFPSKTVAQYSGVPWWIILVAILAGILMLALLVFILWKCGFFKRSRYDDSVPRYHAVRIRKEEREIKDEKYIDNLEKKQWITKWNENESYS</sequence>
<accession>P23229</accession>
<accession>B2RMU9</accession>
<accession>B4DG69</accession>
<accession>B4DKB8</accession>
<accession>C4AM96</accession>
<accession>G5E9H1</accession>
<accession>Q08443</accession>
<accession>Q0MRC7</accession>
<accession>Q14646</accession>
<accession>Q16508</accession>
<accession>Q53RX7</accession>
<accession>Q59HB7</accession>
<accession>Q86VL6</accession>
<accession>Q9UCT1</accession>
<accession>Q9UN03</accession>